<organism>
    <name type="scientific">Vibrio cholerae serotype O1 (strain ATCC 39315 / El Tor Inaba N16961)</name>
    <dbReference type="NCBI Taxonomy" id="243277"/>
    <lineage>
        <taxon>Bacteria</taxon>
        <taxon>Pseudomonadati</taxon>
        <taxon>Pseudomonadota</taxon>
        <taxon>Gammaproteobacteria</taxon>
        <taxon>Vibrionales</taxon>
        <taxon>Vibrionaceae</taxon>
        <taxon>Vibrio</taxon>
    </lineage>
</organism>
<evidence type="ECO:0000255" key="1">
    <source>
        <dbReference type="HAMAP-Rule" id="MF_01400"/>
    </source>
</evidence>
<evidence type="ECO:0000255" key="2">
    <source>
        <dbReference type="PROSITE-ProRule" id="PRU01126"/>
    </source>
</evidence>
<proteinExistence type="inferred from homology"/>
<sequence>MVSEAISKKEIERVKFESKDLHKPDEYWREHLTEEAFYVCRQQGTEAPYSGKLLHNKDTGLYHCTCCQSALFSSENKYDSGCGWPSFDAPINEQVIRFLDDFSHGMVRTEIRCAACDSHLGHVFEDGPKTTGLRFCVNSVSLIFNKK</sequence>
<keyword id="KW-0479">Metal-binding</keyword>
<keyword id="KW-0560">Oxidoreductase</keyword>
<keyword id="KW-1185">Reference proteome</keyword>
<keyword id="KW-0862">Zinc</keyword>
<feature type="chain" id="PRO_0000140312" description="Peptide methionine sulfoxide reductase MsrB">
    <location>
        <begin position="1"/>
        <end position="147"/>
    </location>
</feature>
<feature type="domain" description="MsrB" evidence="2">
    <location>
        <begin position="25"/>
        <end position="147"/>
    </location>
</feature>
<feature type="active site" description="Nucleophile" evidence="2">
    <location>
        <position position="136"/>
    </location>
</feature>
<feature type="binding site" evidence="2">
    <location>
        <position position="64"/>
    </location>
    <ligand>
        <name>Zn(2+)</name>
        <dbReference type="ChEBI" id="CHEBI:29105"/>
    </ligand>
</feature>
<feature type="binding site" evidence="2">
    <location>
        <position position="67"/>
    </location>
    <ligand>
        <name>Zn(2+)</name>
        <dbReference type="ChEBI" id="CHEBI:29105"/>
    </ligand>
</feature>
<feature type="binding site" evidence="2">
    <location>
        <position position="113"/>
    </location>
    <ligand>
        <name>Zn(2+)</name>
        <dbReference type="ChEBI" id="CHEBI:29105"/>
    </ligand>
</feature>
<feature type="binding site" evidence="2">
    <location>
        <position position="116"/>
    </location>
    <ligand>
        <name>Zn(2+)</name>
        <dbReference type="ChEBI" id="CHEBI:29105"/>
    </ligand>
</feature>
<reference key="1">
    <citation type="journal article" date="2000" name="Nature">
        <title>DNA sequence of both chromosomes of the cholera pathogen Vibrio cholerae.</title>
        <authorList>
            <person name="Heidelberg J.F."/>
            <person name="Eisen J.A."/>
            <person name="Nelson W.C."/>
            <person name="Clayton R.A."/>
            <person name="Gwinn M.L."/>
            <person name="Dodson R.J."/>
            <person name="Haft D.H."/>
            <person name="Hickey E.K."/>
            <person name="Peterson J.D."/>
            <person name="Umayam L.A."/>
            <person name="Gill S.R."/>
            <person name="Nelson K.E."/>
            <person name="Read T.D."/>
            <person name="Tettelin H."/>
            <person name="Richardson D.L."/>
            <person name="Ermolaeva M.D."/>
            <person name="Vamathevan J.J."/>
            <person name="Bass S."/>
            <person name="Qin H."/>
            <person name="Dragoi I."/>
            <person name="Sellers P."/>
            <person name="McDonald L.A."/>
            <person name="Utterback T.R."/>
            <person name="Fleischmann R.D."/>
            <person name="Nierman W.C."/>
            <person name="White O."/>
            <person name="Salzberg S.L."/>
            <person name="Smith H.O."/>
            <person name="Colwell R.R."/>
            <person name="Mekalanos J.J."/>
            <person name="Venter J.C."/>
            <person name="Fraser C.M."/>
        </authorList>
    </citation>
    <scope>NUCLEOTIDE SEQUENCE [LARGE SCALE GENOMIC DNA]</scope>
    <source>
        <strain>ATCC 39315 / El Tor Inaba N16961</strain>
    </source>
</reference>
<dbReference type="EC" id="1.8.4.12" evidence="1"/>
<dbReference type="EMBL" id="AE003852">
    <property type="protein sequence ID" value="AAF95146.1"/>
    <property type="molecule type" value="Genomic_DNA"/>
</dbReference>
<dbReference type="PIR" id="D82131">
    <property type="entry name" value="D82131"/>
</dbReference>
<dbReference type="RefSeq" id="NP_231632.1">
    <property type="nucleotide sequence ID" value="NC_002505.1"/>
</dbReference>
<dbReference type="RefSeq" id="WP_001881721.1">
    <property type="nucleotide sequence ID" value="NZ_LT906614.1"/>
</dbReference>
<dbReference type="SMR" id="Q9KQK0"/>
<dbReference type="STRING" id="243277.VC_1998"/>
<dbReference type="DNASU" id="2613502"/>
<dbReference type="EnsemblBacteria" id="AAF95146">
    <property type="protein sequence ID" value="AAF95146"/>
    <property type="gene ID" value="VC_1998"/>
</dbReference>
<dbReference type="KEGG" id="vch:VC_1998"/>
<dbReference type="PATRIC" id="fig|243277.26.peg.1909"/>
<dbReference type="eggNOG" id="COG0229">
    <property type="taxonomic scope" value="Bacteria"/>
</dbReference>
<dbReference type="HOGENOM" id="CLU_031040_8_5_6"/>
<dbReference type="Proteomes" id="UP000000584">
    <property type="component" value="Chromosome 1"/>
</dbReference>
<dbReference type="GO" id="GO:0005737">
    <property type="term" value="C:cytoplasm"/>
    <property type="evidence" value="ECO:0000318"/>
    <property type="project" value="GO_Central"/>
</dbReference>
<dbReference type="GO" id="GO:0033743">
    <property type="term" value="F:peptide-methionine (R)-S-oxide reductase activity"/>
    <property type="evidence" value="ECO:0000318"/>
    <property type="project" value="GO_Central"/>
</dbReference>
<dbReference type="GO" id="GO:0008270">
    <property type="term" value="F:zinc ion binding"/>
    <property type="evidence" value="ECO:0007669"/>
    <property type="project" value="UniProtKB-UniRule"/>
</dbReference>
<dbReference type="GO" id="GO:0030091">
    <property type="term" value="P:protein repair"/>
    <property type="evidence" value="ECO:0007669"/>
    <property type="project" value="InterPro"/>
</dbReference>
<dbReference type="GO" id="GO:0006979">
    <property type="term" value="P:response to oxidative stress"/>
    <property type="evidence" value="ECO:0007669"/>
    <property type="project" value="InterPro"/>
</dbReference>
<dbReference type="FunFam" id="2.170.150.20:FF:000009">
    <property type="entry name" value="Peptide-methionine (R)-S-oxide reductase"/>
    <property type="match status" value="1"/>
</dbReference>
<dbReference type="Gene3D" id="2.170.150.20">
    <property type="entry name" value="Peptide methionine sulfoxide reductase"/>
    <property type="match status" value="1"/>
</dbReference>
<dbReference type="HAMAP" id="MF_01400">
    <property type="entry name" value="MsrB"/>
    <property type="match status" value="1"/>
</dbReference>
<dbReference type="InterPro" id="IPR028427">
    <property type="entry name" value="Met_Sox_Rdtase_MsrB"/>
</dbReference>
<dbReference type="InterPro" id="IPR002579">
    <property type="entry name" value="Met_Sox_Rdtase_MsrB_dom"/>
</dbReference>
<dbReference type="InterPro" id="IPR011057">
    <property type="entry name" value="Mss4-like_sf"/>
</dbReference>
<dbReference type="NCBIfam" id="TIGR00357">
    <property type="entry name" value="peptide-methionine (R)-S-oxide reductase MsrB"/>
    <property type="match status" value="1"/>
</dbReference>
<dbReference type="PANTHER" id="PTHR10173">
    <property type="entry name" value="METHIONINE SULFOXIDE REDUCTASE"/>
    <property type="match status" value="1"/>
</dbReference>
<dbReference type="PANTHER" id="PTHR10173:SF52">
    <property type="entry name" value="METHIONINE-R-SULFOXIDE REDUCTASE B1"/>
    <property type="match status" value="1"/>
</dbReference>
<dbReference type="Pfam" id="PF01641">
    <property type="entry name" value="SelR"/>
    <property type="match status" value="1"/>
</dbReference>
<dbReference type="SUPFAM" id="SSF51316">
    <property type="entry name" value="Mss4-like"/>
    <property type="match status" value="1"/>
</dbReference>
<dbReference type="PROSITE" id="PS51790">
    <property type="entry name" value="MSRB"/>
    <property type="match status" value="1"/>
</dbReference>
<protein>
    <recommendedName>
        <fullName evidence="1">Peptide methionine sulfoxide reductase MsrB</fullName>
        <ecNumber evidence="1">1.8.4.12</ecNumber>
    </recommendedName>
    <alternativeName>
        <fullName evidence="1">Peptide-methionine (R)-S-oxide reductase</fullName>
    </alternativeName>
</protein>
<accession>Q9KQK0</accession>
<comment type="catalytic activity">
    <reaction evidence="1">
        <text>L-methionyl-[protein] + [thioredoxin]-disulfide + H2O = L-methionyl-(R)-S-oxide-[protein] + [thioredoxin]-dithiol</text>
        <dbReference type="Rhea" id="RHEA:24164"/>
        <dbReference type="Rhea" id="RHEA-COMP:10698"/>
        <dbReference type="Rhea" id="RHEA-COMP:10700"/>
        <dbReference type="Rhea" id="RHEA-COMP:12313"/>
        <dbReference type="Rhea" id="RHEA-COMP:12314"/>
        <dbReference type="ChEBI" id="CHEBI:15377"/>
        <dbReference type="ChEBI" id="CHEBI:16044"/>
        <dbReference type="ChEBI" id="CHEBI:29950"/>
        <dbReference type="ChEBI" id="CHEBI:45764"/>
        <dbReference type="ChEBI" id="CHEBI:50058"/>
        <dbReference type="EC" id="1.8.4.12"/>
    </reaction>
</comment>
<comment type="cofactor">
    <cofactor evidence="1">
        <name>Zn(2+)</name>
        <dbReference type="ChEBI" id="CHEBI:29105"/>
    </cofactor>
    <text evidence="1">Binds 1 zinc ion per subunit. The zinc ion is important for the structural integrity of the protein.</text>
</comment>
<comment type="similarity">
    <text evidence="1">Belongs to the MsrB Met sulfoxide reductase family.</text>
</comment>
<name>MSRB_VIBCH</name>
<gene>
    <name evidence="1" type="primary">msrB</name>
    <name type="ordered locus">VC_1998</name>
</gene>